<sequence>MKHIRNFSIIAHIDHGKSTLSDRIIQICGGLSEREMAAQVLDSMDLERERGITIKAQSVTLDYHAKDGQTYQLNFIDTPGHVDFSYEVSRSLAACEGALLVVDAGQGVEAQTLANCYTAMEMNLEVVPVLNKIDLPAADPERVAEEIEDIVGIDATDAVRCSAKTGVGVPDILERLVRDIPPPQGDPDGPLQALIIDSWFDNYLGVVSLIRIKNGSLRKGDKVKVMSTGQSYNADRLGIFTPKRVDRDVLSCGEVGWLVCAIKDILGAPVGDTLTLARNPAEKSLPGFKKVKPQVYAGLFPISSDDYEAFRDALGKLSLNDASLFYEPESSTALGFGFRCGFLGLLHMEIIQERLEREYDLELITTAPTVVYEVITTAQETVYVDSPSKLPALNNIEELREPIAECHMLLPQEYLGNVITLCIEKRGMQTNMVYHGNQVALTYEIPMAEVVLDFFDRLKSTSRGYASLDYNFKRFQTSDMVRVDVLINNERVDALALITHRDNAQYRGRDLVEKMKELIPRQQFDIAIQAAIGNHIIARSTVKQLRKNVLAKCYGGDVSRKKKLLQKQKDGKKRMKQVGNVELPQEAFLAILHVGKDSK</sequence>
<accession>A1JKK1</accession>
<reference key="1">
    <citation type="journal article" date="2006" name="PLoS Genet.">
        <title>The complete genome sequence and comparative genome analysis of the high pathogenicity Yersinia enterocolitica strain 8081.</title>
        <authorList>
            <person name="Thomson N.R."/>
            <person name="Howard S."/>
            <person name="Wren B.W."/>
            <person name="Holden M.T.G."/>
            <person name="Crossman L."/>
            <person name="Challis G.L."/>
            <person name="Churcher C."/>
            <person name="Mungall K."/>
            <person name="Brooks K."/>
            <person name="Chillingworth T."/>
            <person name="Feltwell T."/>
            <person name="Abdellah Z."/>
            <person name="Hauser H."/>
            <person name="Jagels K."/>
            <person name="Maddison M."/>
            <person name="Moule S."/>
            <person name="Sanders M."/>
            <person name="Whitehead S."/>
            <person name="Quail M.A."/>
            <person name="Dougan G."/>
            <person name="Parkhill J."/>
            <person name="Prentice M.B."/>
        </authorList>
    </citation>
    <scope>NUCLEOTIDE SEQUENCE [LARGE SCALE GENOMIC DNA]</scope>
    <source>
        <strain>NCTC 13174 / 8081</strain>
    </source>
</reference>
<proteinExistence type="inferred from homology"/>
<gene>
    <name evidence="1" type="primary">lepA</name>
    <name type="ordered locus">YE1015</name>
</gene>
<dbReference type="EC" id="3.6.5.n1" evidence="1"/>
<dbReference type="EMBL" id="AM286415">
    <property type="protein sequence ID" value="CAL11113.1"/>
    <property type="molecule type" value="Genomic_DNA"/>
</dbReference>
<dbReference type="RefSeq" id="WP_005172749.1">
    <property type="nucleotide sequence ID" value="NC_008800.1"/>
</dbReference>
<dbReference type="RefSeq" id="YP_001005348.1">
    <property type="nucleotide sequence ID" value="NC_008800.1"/>
</dbReference>
<dbReference type="SMR" id="A1JKK1"/>
<dbReference type="KEGG" id="yen:YE1015"/>
<dbReference type="PATRIC" id="fig|393305.7.peg.1111"/>
<dbReference type="eggNOG" id="COG0481">
    <property type="taxonomic scope" value="Bacteria"/>
</dbReference>
<dbReference type="HOGENOM" id="CLU_009995_3_3_6"/>
<dbReference type="OrthoDB" id="9804431at2"/>
<dbReference type="Proteomes" id="UP000000642">
    <property type="component" value="Chromosome"/>
</dbReference>
<dbReference type="GO" id="GO:0005886">
    <property type="term" value="C:plasma membrane"/>
    <property type="evidence" value="ECO:0007669"/>
    <property type="project" value="UniProtKB-SubCell"/>
</dbReference>
<dbReference type="GO" id="GO:0005525">
    <property type="term" value="F:GTP binding"/>
    <property type="evidence" value="ECO:0007669"/>
    <property type="project" value="UniProtKB-UniRule"/>
</dbReference>
<dbReference type="GO" id="GO:0003924">
    <property type="term" value="F:GTPase activity"/>
    <property type="evidence" value="ECO:0007669"/>
    <property type="project" value="UniProtKB-UniRule"/>
</dbReference>
<dbReference type="GO" id="GO:0097216">
    <property type="term" value="F:guanosine tetraphosphate binding"/>
    <property type="evidence" value="ECO:0007669"/>
    <property type="project" value="UniProtKB-ARBA"/>
</dbReference>
<dbReference type="GO" id="GO:0043022">
    <property type="term" value="F:ribosome binding"/>
    <property type="evidence" value="ECO:0007669"/>
    <property type="project" value="UniProtKB-UniRule"/>
</dbReference>
<dbReference type="GO" id="GO:0003746">
    <property type="term" value="F:translation elongation factor activity"/>
    <property type="evidence" value="ECO:0007669"/>
    <property type="project" value="UniProtKB-UniRule"/>
</dbReference>
<dbReference type="GO" id="GO:0045727">
    <property type="term" value="P:positive regulation of translation"/>
    <property type="evidence" value="ECO:0007669"/>
    <property type="project" value="UniProtKB-UniRule"/>
</dbReference>
<dbReference type="CDD" id="cd03699">
    <property type="entry name" value="EF4_II"/>
    <property type="match status" value="1"/>
</dbReference>
<dbReference type="CDD" id="cd16260">
    <property type="entry name" value="EF4_III"/>
    <property type="match status" value="1"/>
</dbReference>
<dbReference type="CDD" id="cd01890">
    <property type="entry name" value="LepA"/>
    <property type="match status" value="1"/>
</dbReference>
<dbReference type="CDD" id="cd03709">
    <property type="entry name" value="lepA_C"/>
    <property type="match status" value="1"/>
</dbReference>
<dbReference type="FunFam" id="3.30.70.240:FF:000005">
    <property type="entry name" value="Elongation factor 4"/>
    <property type="match status" value="1"/>
</dbReference>
<dbReference type="FunFam" id="3.40.50.300:FF:000078">
    <property type="entry name" value="Elongation factor 4"/>
    <property type="match status" value="1"/>
</dbReference>
<dbReference type="FunFam" id="2.40.30.10:FF:000015">
    <property type="entry name" value="Translation factor GUF1, mitochondrial"/>
    <property type="match status" value="1"/>
</dbReference>
<dbReference type="FunFam" id="3.30.70.2570:FF:000001">
    <property type="entry name" value="Translation factor GUF1, mitochondrial"/>
    <property type="match status" value="1"/>
</dbReference>
<dbReference type="FunFam" id="3.30.70.870:FF:000004">
    <property type="entry name" value="Translation factor GUF1, mitochondrial"/>
    <property type="match status" value="1"/>
</dbReference>
<dbReference type="Gene3D" id="3.30.70.240">
    <property type="match status" value="1"/>
</dbReference>
<dbReference type="Gene3D" id="3.30.70.2570">
    <property type="entry name" value="Elongation factor 4, C-terminal domain"/>
    <property type="match status" value="1"/>
</dbReference>
<dbReference type="Gene3D" id="3.30.70.870">
    <property type="entry name" value="Elongation Factor G (Translational Gtpase), domain 3"/>
    <property type="match status" value="1"/>
</dbReference>
<dbReference type="Gene3D" id="3.40.50.300">
    <property type="entry name" value="P-loop containing nucleotide triphosphate hydrolases"/>
    <property type="match status" value="1"/>
</dbReference>
<dbReference type="Gene3D" id="2.40.30.10">
    <property type="entry name" value="Translation factors"/>
    <property type="match status" value="1"/>
</dbReference>
<dbReference type="HAMAP" id="MF_00071">
    <property type="entry name" value="LepA"/>
    <property type="match status" value="1"/>
</dbReference>
<dbReference type="InterPro" id="IPR006297">
    <property type="entry name" value="EF-4"/>
</dbReference>
<dbReference type="InterPro" id="IPR035647">
    <property type="entry name" value="EFG_III/V"/>
</dbReference>
<dbReference type="InterPro" id="IPR000640">
    <property type="entry name" value="EFG_V-like"/>
</dbReference>
<dbReference type="InterPro" id="IPR004161">
    <property type="entry name" value="EFTu-like_2"/>
</dbReference>
<dbReference type="InterPro" id="IPR031157">
    <property type="entry name" value="G_TR_CS"/>
</dbReference>
<dbReference type="InterPro" id="IPR038363">
    <property type="entry name" value="LepA_C_sf"/>
</dbReference>
<dbReference type="InterPro" id="IPR013842">
    <property type="entry name" value="LepA_CTD"/>
</dbReference>
<dbReference type="InterPro" id="IPR035654">
    <property type="entry name" value="LepA_IV"/>
</dbReference>
<dbReference type="InterPro" id="IPR027417">
    <property type="entry name" value="P-loop_NTPase"/>
</dbReference>
<dbReference type="InterPro" id="IPR005225">
    <property type="entry name" value="Small_GTP-bd"/>
</dbReference>
<dbReference type="InterPro" id="IPR000795">
    <property type="entry name" value="T_Tr_GTP-bd_dom"/>
</dbReference>
<dbReference type="NCBIfam" id="TIGR01393">
    <property type="entry name" value="lepA"/>
    <property type="match status" value="1"/>
</dbReference>
<dbReference type="NCBIfam" id="TIGR00231">
    <property type="entry name" value="small_GTP"/>
    <property type="match status" value="1"/>
</dbReference>
<dbReference type="PANTHER" id="PTHR43512:SF4">
    <property type="entry name" value="TRANSLATION FACTOR GUF1 HOMOLOG, CHLOROPLASTIC"/>
    <property type="match status" value="1"/>
</dbReference>
<dbReference type="PANTHER" id="PTHR43512">
    <property type="entry name" value="TRANSLATION FACTOR GUF1-RELATED"/>
    <property type="match status" value="1"/>
</dbReference>
<dbReference type="Pfam" id="PF00679">
    <property type="entry name" value="EFG_C"/>
    <property type="match status" value="1"/>
</dbReference>
<dbReference type="Pfam" id="PF00009">
    <property type="entry name" value="GTP_EFTU"/>
    <property type="match status" value="1"/>
</dbReference>
<dbReference type="Pfam" id="PF03144">
    <property type="entry name" value="GTP_EFTU_D2"/>
    <property type="match status" value="1"/>
</dbReference>
<dbReference type="Pfam" id="PF06421">
    <property type="entry name" value="LepA_C"/>
    <property type="match status" value="1"/>
</dbReference>
<dbReference type="PRINTS" id="PR00315">
    <property type="entry name" value="ELONGATNFCT"/>
</dbReference>
<dbReference type="SUPFAM" id="SSF54980">
    <property type="entry name" value="EF-G C-terminal domain-like"/>
    <property type="match status" value="2"/>
</dbReference>
<dbReference type="SUPFAM" id="SSF52540">
    <property type="entry name" value="P-loop containing nucleoside triphosphate hydrolases"/>
    <property type="match status" value="1"/>
</dbReference>
<dbReference type="PROSITE" id="PS00301">
    <property type="entry name" value="G_TR_1"/>
    <property type="match status" value="1"/>
</dbReference>
<dbReference type="PROSITE" id="PS51722">
    <property type="entry name" value="G_TR_2"/>
    <property type="match status" value="1"/>
</dbReference>
<keyword id="KW-0997">Cell inner membrane</keyword>
<keyword id="KW-1003">Cell membrane</keyword>
<keyword id="KW-0342">GTP-binding</keyword>
<keyword id="KW-0378">Hydrolase</keyword>
<keyword id="KW-0472">Membrane</keyword>
<keyword id="KW-0547">Nucleotide-binding</keyword>
<keyword id="KW-0648">Protein biosynthesis</keyword>
<evidence type="ECO:0000255" key="1">
    <source>
        <dbReference type="HAMAP-Rule" id="MF_00071"/>
    </source>
</evidence>
<comment type="function">
    <text evidence="1">Required for accurate and efficient protein synthesis under certain stress conditions. May act as a fidelity factor of the translation reaction, by catalyzing a one-codon backward translocation of tRNAs on improperly translocated ribosomes. Back-translocation proceeds from a post-translocation (POST) complex to a pre-translocation (PRE) complex, thus giving elongation factor G a second chance to translocate the tRNAs correctly. Binds to ribosomes in a GTP-dependent manner.</text>
</comment>
<comment type="catalytic activity">
    <reaction evidence="1">
        <text>GTP + H2O = GDP + phosphate + H(+)</text>
        <dbReference type="Rhea" id="RHEA:19669"/>
        <dbReference type="ChEBI" id="CHEBI:15377"/>
        <dbReference type="ChEBI" id="CHEBI:15378"/>
        <dbReference type="ChEBI" id="CHEBI:37565"/>
        <dbReference type="ChEBI" id="CHEBI:43474"/>
        <dbReference type="ChEBI" id="CHEBI:58189"/>
        <dbReference type="EC" id="3.6.5.n1"/>
    </reaction>
</comment>
<comment type="subcellular location">
    <subcellularLocation>
        <location evidence="1">Cell inner membrane</location>
        <topology evidence="1">Peripheral membrane protein</topology>
        <orientation evidence="1">Cytoplasmic side</orientation>
    </subcellularLocation>
</comment>
<comment type="similarity">
    <text evidence="1">Belongs to the TRAFAC class translation factor GTPase superfamily. Classic translation factor GTPase family. LepA subfamily.</text>
</comment>
<organism>
    <name type="scientific">Yersinia enterocolitica serotype O:8 / biotype 1B (strain NCTC 13174 / 8081)</name>
    <dbReference type="NCBI Taxonomy" id="393305"/>
    <lineage>
        <taxon>Bacteria</taxon>
        <taxon>Pseudomonadati</taxon>
        <taxon>Pseudomonadota</taxon>
        <taxon>Gammaproteobacteria</taxon>
        <taxon>Enterobacterales</taxon>
        <taxon>Yersiniaceae</taxon>
        <taxon>Yersinia</taxon>
    </lineage>
</organism>
<protein>
    <recommendedName>
        <fullName evidence="1">Elongation factor 4</fullName>
        <shortName evidence="1">EF-4</shortName>
        <ecNumber evidence="1">3.6.5.n1</ecNumber>
    </recommendedName>
    <alternativeName>
        <fullName evidence="1">Ribosomal back-translocase LepA</fullName>
    </alternativeName>
</protein>
<name>LEPA_YERE8</name>
<feature type="chain" id="PRO_1000032069" description="Elongation factor 4">
    <location>
        <begin position="1"/>
        <end position="599"/>
    </location>
</feature>
<feature type="domain" description="tr-type G">
    <location>
        <begin position="2"/>
        <end position="184"/>
    </location>
</feature>
<feature type="binding site" evidence="1">
    <location>
        <begin position="14"/>
        <end position="19"/>
    </location>
    <ligand>
        <name>GTP</name>
        <dbReference type="ChEBI" id="CHEBI:37565"/>
    </ligand>
</feature>
<feature type="binding site" evidence="1">
    <location>
        <begin position="131"/>
        <end position="134"/>
    </location>
    <ligand>
        <name>GTP</name>
        <dbReference type="ChEBI" id="CHEBI:37565"/>
    </ligand>
</feature>